<comment type="function">
    <text evidence="1">Usually encoded in the trnK tRNA gene intron. Probably assists in splicing its own and other chloroplast group II introns.</text>
</comment>
<comment type="subcellular location">
    <subcellularLocation>
        <location>Plastid</location>
        <location>Chloroplast</location>
    </subcellularLocation>
</comment>
<comment type="similarity">
    <text evidence="1">Belongs to the intron maturase 2 family. MatK subfamily.</text>
</comment>
<evidence type="ECO:0000255" key="1">
    <source>
        <dbReference type="HAMAP-Rule" id="MF_01390"/>
    </source>
</evidence>
<gene>
    <name evidence="1" type="primary">matK</name>
</gene>
<geneLocation type="chloroplast"/>
<accession>Q85ZV6</accession>
<proteinExistence type="inferred from homology"/>
<dbReference type="EMBL" id="AB078095">
    <property type="protein sequence ID" value="BAC54847.1"/>
    <property type="molecule type" value="Genomic_DNA"/>
</dbReference>
<dbReference type="GO" id="GO:0009507">
    <property type="term" value="C:chloroplast"/>
    <property type="evidence" value="ECO:0007669"/>
    <property type="project" value="UniProtKB-SubCell"/>
</dbReference>
<dbReference type="GO" id="GO:0003723">
    <property type="term" value="F:RNA binding"/>
    <property type="evidence" value="ECO:0007669"/>
    <property type="project" value="UniProtKB-KW"/>
</dbReference>
<dbReference type="GO" id="GO:0006397">
    <property type="term" value="P:mRNA processing"/>
    <property type="evidence" value="ECO:0007669"/>
    <property type="project" value="UniProtKB-KW"/>
</dbReference>
<dbReference type="GO" id="GO:0008380">
    <property type="term" value="P:RNA splicing"/>
    <property type="evidence" value="ECO:0007669"/>
    <property type="project" value="UniProtKB-UniRule"/>
</dbReference>
<dbReference type="GO" id="GO:0008033">
    <property type="term" value="P:tRNA processing"/>
    <property type="evidence" value="ECO:0007669"/>
    <property type="project" value="UniProtKB-KW"/>
</dbReference>
<dbReference type="HAMAP" id="MF_01390">
    <property type="entry name" value="MatK"/>
    <property type="match status" value="1"/>
</dbReference>
<dbReference type="InterPro" id="IPR024937">
    <property type="entry name" value="Domain_X"/>
</dbReference>
<dbReference type="InterPro" id="IPR002866">
    <property type="entry name" value="Maturase_MatK"/>
</dbReference>
<dbReference type="InterPro" id="IPR024942">
    <property type="entry name" value="Maturase_MatK_N"/>
</dbReference>
<dbReference type="PANTHER" id="PTHR34811">
    <property type="entry name" value="MATURASE K"/>
    <property type="match status" value="1"/>
</dbReference>
<dbReference type="PANTHER" id="PTHR34811:SF1">
    <property type="entry name" value="MATURASE K"/>
    <property type="match status" value="1"/>
</dbReference>
<dbReference type="Pfam" id="PF01348">
    <property type="entry name" value="Intron_maturas2"/>
    <property type="match status" value="1"/>
</dbReference>
<dbReference type="Pfam" id="PF01824">
    <property type="entry name" value="MatK_N"/>
    <property type="match status" value="1"/>
</dbReference>
<reference key="1">
    <citation type="journal article" date="2002" name="Genome">
        <title>Molecular phylogeny of the genus Hordeum using three chloroplast DNA sequences.</title>
        <authorList>
            <person name="Nishikawa T."/>
            <person name="Salomon B."/>
            <person name="Komatsuda T."/>
            <person name="von Bothmer R."/>
            <person name="Kadowaki K."/>
        </authorList>
    </citation>
    <scope>NUCLEOTIDE SEQUENCE [GENOMIC DNA]</scope>
    <source>
        <strain>H3878</strain>
    </source>
</reference>
<sequence length="511" mass="61402">MEKFEGYSEKQKSRQQYFVYPLLFQEYIYAFAHDYGLNGSEPVEIVSWNNKKFSSLLVKRLIIRMYQQNFLDNSVNHPNQDRLLDYKNYFYSEFYSQILSEGFAIVVEIPFSLRELSCPKEKEIPKFQNLRSIHSIFPFLEDKFLHLDYLSHIEIPYPIHLEILVQLLQYRIQDVPSLHLLRFFLNYYSNWNSFITSMKSFFFFQKENKRLVKFLYNSYVSEYEFFLLFLRKQSSCLPLAYSGTFLERIHFSRKMEHFGIMYPGFSRKTLWFFMDPLMHYVRYQGKAILASKGSFFLKKKWKCYLINFWQYYFFFWTQPRRIHINQLANSCFDFMGYLSSVPKSPLLVRNQMLENSFLIDTRMKKFDTIVPATLLIGYLSKAQFCTGSGHPISKPIWTDLSDWDILDRFGRICRNLFHYHSGSSKKQTLYRLKYILRLSCARTLARKHKSTVRTFMQRLGSAFLEEFFTEEEQVFSLMFTKTTLFSFSGSHTERIWYLDIIGINDLVNPLN</sequence>
<feature type="chain" id="PRO_0000143419" description="Maturase K">
    <location>
        <begin position="1"/>
        <end position="511"/>
    </location>
</feature>
<protein>
    <recommendedName>
        <fullName evidence="1">Maturase K</fullName>
    </recommendedName>
    <alternativeName>
        <fullName evidence="1">Intron maturase</fullName>
    </alternativeName>
</protein>
<keyword id="KW-0150">Chloroplast</keyword>
<keyword id="KW-0507">mRNA processing</keyword>
<keyword id="KW-0934">Plastid</keyword>
<keyword id="KW-0694">RNA-binding</keyword>
<keyword id="KW-0819">tRNA processing</keyword>
<name>MATK_HORBU</name>
<organism>
    <name type="scientific">Hordeum bulbosum</name>
    <name type="common">Bulbous barley</name>
    <name type="synonym">Critesion bulbosum</name>
    <dbReference type="NCBI Taxonomy" id="4516"/>
    <lineage>
        <taxon>Eukaryota</taxon>
        <taxon>Viridiplantae</taxon>
        <taxon>Streptophyta</taxon>
        <taxon>Embryophyta</taxon>
        <taxon>Tracheophyta</taxon>
        <taxon>Spermatophyta</taxon>
        <taxon>Magnoliopsida</taxon>
        <taxon>Liliopsida</taxon>
        <taxon>Poales</taxon>
        <taxon>Poaceae</taxon>
        <taxon>BOP clade</taxon>
        <taxon>Pooideae</taxon>
        <taxon>Triticodae</taxon>
        <taxon>Triticeae</taxon>
        <taxon>Hordeinae</taxon>
        <taxon>Hordeum</taxon>
    </lineage>
</organism>